<gene>
    <name evidence="1" type="primary">rpmC</name>
    <name type="ordered locus">SpyM50052</name>
</gene>
<protein>
    <recommendedName>
        <fullName evidence="1">Large ribosomal subunit protein uL29</fullName>
    </recommendedName>
    <alternativeName>
        <fullName evidence="2">50S ribosomal protein L29</fullName>
    </alternativeName>
</protein>
<accession>A2RC22</accession>
<evidence type="ECO:0000255" key="1">
    <source>
        <dbReference type="HAMAP-Rule" id="MF_00374"/>
    </source>
</evidence>
<evidence type="ECO:0000305" key="2"/>
<organism>
    <name type="scientific">Streptococcus pyogenes serotype M5 (strain Manfredo)</name>
    <dbReference type="NCBI Taxonomy" id="160491"/>
    <lineage>
        <taxon>Bacteria</taxon>
        <taxon>Bacillati</taxon>
        <taxon>Bacillota</taxon>
        <taxon>Bacilli</taxon>
        <taxon>Lactobacillales</taxon>
        <taxon>Streptococcaceae</taxon>
        <taxon>Streptococcus</taxon>
    </lineage>
</organism>
<dbReference type="EMBL" id="AM295007">
    <property type="protein sequence ID" value="CAM29394.1"/>
    <property type="molecule type" value="Genomic_DNA"/>
</dbReference>
<dbReference type="RefSeq" id="WP_000775731.1">
    <property type="nucleotide sequence ID" value="NC_009332.1"/>
</dbReference>
<dbReference type="SMR" id="A2RC22"/>
<dbReference type="GeneID" id="69900034"/>
<dbReference type="KEGG" id="spf:SpyM50052"/>
<dbReference type="HOGENOM" id="CLU_158491_5_2_9"/>
<dbReference type="GO" id="GO:0022625">
    <property type="term" value="C:cytosolic large ribosomal subunit"/>
    <property type="evidence" value="ECO:0007669"/>
    <property type="project" value="TreeGrafter"/>
</dbReference>
<dbReference type="GO" id="GO:0003735">
    <property type="term" value="F:structural constituent of ribosome"/>
    <property type="evidence" value="ECO:0007669"/>
    <property type="project" value="InterPro"/>
</dbReference>
<dbReference type="GO" id="GO:0006412">
    <property type="term" value="P:translation"/>
    <property type="evidence" value="ECO:0007669"/>
    <property type="project" value="UniProtKB-UniRule"/>
</dbReference>
<dbReference type="CDD" id="cd00427">
    <property type="entry name" value="Ribosomal_L29_HIP"/>
    <property type="match status" value="1"/>
</dbReference>
<dbReference type="FunFam" id="1.10.287.310:FF:000001">
    <property type="entry name" value="50S ribosomal protein L29"/>
    <property type="match status" value="1"/>
</dbReference>
<dbReference type="Gene3D" id="1.10.287.310">
    <property type="match status" value="1"/>
</dbReference>
<dbReference type="HAMAP" id="MF_00374">
    <property type="entry name" value="Ribosomal_uL29"/>
    <property type="match status" value="1"/>
</dbReference>
<dbReference type="InterPro" id="IPR050063">
    <property type="entry name" value="Ribosomal_protein_uL29"/>
</dbReference>
<dbReference type="InterPro" id="IPR001854">
    <property type="entry name" value="Ribosomal_uL29"/>
</dbReference>
<dbReference type="InterPro" id="IPR018254">
    <property type="entry name" value="Ribosomal_uL29_CS"/>
</dbReference>
<dbReference type="InterPro" id="IPR036049">
    <property type="entry name" value="Ribosomal_uL29_sf"/>
</dbReference>
<dbReference type="NCBIfam" id="TIGR00012">
    <property type="entry name" value="L29"/>
    <property type="match status" value="1"/>
</dbReference>
<dbReference type="PANTHER" id="PTHR10916">
    <property type="entry name" value="60S RIBOSOMAL PROTEIN L35/50S RIBOSOMAL PROTEIN L29"/>
    <property type="match status" value="1"/>
</dbReference>
<dbReference type="PANTHER" id="PTHR10916:SF0">
    <property type="entry name" value="LARGE RIBOSOMAL SUBUNIT PROTEIN UL29C"/>
    <property type="match status" value="1"/>
</dbReference>
<dbReference type="Pfam" id="PF00831">
    <property type="entry name" value="Ribosomal_L29"/>
    <property type="match status" value="1"/>
</dbReference>
<dbReference type="SUPFAM" id="SSF46561">
    <property type="entry name" value="Ribosomal protein L29 (L29p)"/>
    <property type="match status" value="1"/>
</dbReference>
<dbReference type="PROSITE" id="PS00579">
    <property type="entry name" value="RIBOSOMAL_L29"/>
    <property type="match status" value="1"/>
</dbReference>
<keyword id="KW-0687">Ribonucleoprotein</keyword>
<keyword id="KW-0689">Ribosomal protein</keyword>
<comment type="similarity">
    <text evidence="1">Belongs to the universal ribosomal protein uL29 family.</text>
</comment>
<name>RL29_STRPG</name>
<proteinExistence type="inferred from homology"/>
<sequence>MKLQEIKDFVKELRGLSQEELAKKENELKKELFDLRFQAAAGQLEKTARLDEVKKQIARVKTVQSEMK</sequence>
<feature type="chain" id="PRO_1000007628" description="Large ribosomal subunit protein uL29">
    <location>
        <begin position="1"/>
        <end position="68"/>
    </location>
</feature>
<reference key="1">
    <citation type="journal article" date="2007" name="J. Bacteriol.">
        <title>Complete genome of acute rheumatic fever-associated serotype M5 Streptococcus pyogenes strain Manfredo.</title>
        <authorList>
            <person name="Holden M.T.G."/>
            <person name="Scott A."/>
            <person name="Cherevach I."/>
            <person name="Chillingworth T."/>
            <person name="Churcher C."/>
            <person name="Cronin A."/>
            <person name="Dowd L."/>
            <person name="Feltwell T."/>
            <person name="Hamlin N."/>
            <person name="Holroyd S."/>
            <person name="Jagels K."/>
            <person name="Moule S."/>
            <person name="Mungall K."/>
            <person name="Quail M.A."/>
            <person name="Price C."/>
            <person name="Rabbinowitsch E."/>
            <person name="Sharp S."/>
            <person name="Skelton J."/>
            <person name="Whitehead S."/>
            <person name="Barrell B.G."/>
            <person name="Kehoe M."/>
            <person name="Parkhill J."/>
        </authorList>
    </citation>
    <scope>NUCLEOTIDE SEQUENCE [LARGE SCALE GENOMIC DNA]</scope>
    <source>
        <strain>Manfredo</strain>
    </source>
</reference>